<feature type="chain" id="PRO_0000337592" description="Elongation factor Tu 2">
    <location>
        <begin position="1"/>
        <end position="394"/>
    </location>
</feature>
<feature type="domain" description="tr-type G">
    <location>
        <begin position="10"/>
        <end position="204"/>
    </location>
</feature>
<feature type="region of interest" description="G1" evidence="1">
    <location>
        <begin position="19"/>
        <end position="26"/>
    </location>
</feature>
<feature type="region of interest" description="G2" evidence="1">
    <location>
        <begin position="60"/>
        <end position="64"/>
    </location>
</feature>
<feature type="region of interest" description="G3" evidence="1">
    <location>
        <begin position="81"/>
        <end position="84"/>
    </location>
</feature>
<feature type="region of interest" description="G4" evidence="1">
    <location>
        <begin position="136"/>
        <end position="139"/>
    </location>
</feature>
<feature type="region of interest" description="G5" evidence="1">
    <location>
        <begin position="174"/>
        <end position="176"/>
    </location>
</feature>
<feature type="binding site" evidence="2">
    <location>
        <begin position="19"/>
        <end position="26"/>
    </location>
    <ligand>
        <name>GTP</name>
        <dbReference type="ChEBI" id="CHEBI:37565"/>
    </ligand>
</feature>
<feature type="binding site" evidence="2">
    <location>
        <position position="26"/>
    </location>
    <ligand>
        <name>Mg(2+)</name>
        <dbReference type="ChEBI" id="CHEBI:18420"/>
    </ligand>
</feature>
<feature type="binding site" evidence="2">
    <location>
        <begin position="81"/>
        <end position="85"/>
    </location>
    <ligand>
        <name>GTP</name>
        <dbReference type="ChEBI" id="CHEBI:37565"/>
    </ligand>
</feature>
<feature type="binding site" evidence="2">
    <location>
        <begin position="136"/>
        <end position="139"/>
    </location>
    <ligand>
        <name>GTP</name>
        <dbReference type="ChEBI" id="CHEBI:37565"/>
    </ligand>
</feature>
<organism>
    <name type="scientific">Yersinia pseudotuberculosis serotype O:1b (strain IP 31758)</name>
    <dbReference type="NCBI Taxonomy" id="349747"/>
    <lineage>
        <taxon>Bacteria</taxon>
        <taxon>Pseudomonadati</taxon>
        <taxon>Pseudomonadota</taxon>
        <taxon>Gammaproteobacteria</taxon>
        <taxon>Enterobacterales</taxon>
        <taxon>Yersiniaceae</taxon>
        <taxon>Yersinia</taxon>
    </lineage>
</organism>
<name>EFTU2_YERP3</name>
<proteinExistence type="inferred from homology"/>
<evidence type="ECO:0000250" key="1"/>
<evidence type="ECO:0000255" key="2">
    <source>
        <dbReference type="HAMAP-Rule" id="MF_00118"/>
    </source>
</evidence>
<keyword id="KW-0963">Cytoplasm</keyword>
<keyword id="KW-0251">Elongation factor</keyword>
<keyword id="KW-0342">GTP-binding</keyword>
<keyword id="KW-0378">Hydrolase</keyword>
<keyword id="KW-0460">Magnesium</keyword>
<keyword id="KW-0479">Metal-binding</keyword>
<keyword id="KW-0547">Nucleotide-binding</keyword>
<keyword id="KW-0648">Protein biosynthesis</keyword>
<protein>
    <recommendedName>
        <fullName evidence="2">Elongation factor Tu 2</fullName>
        <shortName evidence="2">EF-Tu 2</shortName>
        <ecNumber evidence="2">3.6.5.3</ecNumber>
    </recommendedName>
</protein>
<sequence length="394" mass="43160">MSKEKFERTKPHVNVGTIGHVDHGKTTLTAAITTVLAKTYGGSARAFDQIDNAPEEKARGITINTSHVEYDTPARHYAHVDCPGHADYVKNMITGAAQMDGAILVVAATDGPMPQTREHILLGRQVGVPYIIVFMNKCDMVDDEELLELVEMEVRELLSAYDFPGDDLPVVRGSALKALEGEAEWEAKIIELAGYLDSYIPEPERAIDKPFLLPIEDVFSISGRGTVVTGRVERGIVKVGEEVEIVGIKDTVKSTCTGVEMFRKLLDEGRAGENVGVLLRGIKREDIERGQVLAKPGSIKPHTTFESEVYILSKDEGGRHTPFFKGYRPQFYFRTTDVTGTIELPEGVEMVMPGDNINMIVTLIHPIAMDDGLRFAIREGGRTVGAGVVAKVIA</sequence>
<reference key="1">
    <citation type="journal article" date="2007" name="PLoS Genet.">
        <title>The complete genome sequence of Yersinia pseudotuberculosis IP31758, the causative agent of Far East scarlet-like fever.</title>
        <authorList>
            <person name="Eppinger M."/>
            <person name="Rosovitz M.J."/>
            <person name="Fricke W.F."/>
            <person name="Rasko D.A."/>
            <person name="Kokorina G."/>
            <person name="Fayolle C."/>
            <person name="Lindler L.E."/>
            <person name="Carniel E."/>
            <person name="Ravel J."/>
        </authorList>
    </citation>
    <scope>NUCLEOTIDE SEQUENCE [LARGE SCALE GENOMIC DNA]</scope>
    <source>
        <strain>IP 31758</strain>
    </source>
</reference>
<comment type="function">
    <text evidence="2">GTP hydrolase that promotes the GTP-dependent binding of aminoacyl-tRNA to the A-site of ribosomes during protein biosynthesis.</text>
</comment>
<comment type="catalytic activity">
    <reaction evidence="2">
        <text>GTP + H2O = GDP + phosphate + H(+)</text>
        <dbReference type="Rhea" id="RHEA:19669"/>
        <dbReference type="ChEBI" id="CHEBI:15377"/>
        <dbReference type="ChEBI" id="CHEBI:15378"/>
        <dbReference type="ChEBI" id="CHEBI:37565"/>
        <dbReference type="ChEBI" id="CHEBI:43474"/>
        <dbReference type="ChEBI" id="CHEBI:58189"/>
        <dbReference type="EC" id="3.6.5.3"/>
    </reaction>
    <physiologicalReaction direction="left-to-right" evidence="2">
        <dbReference type="Rhea" id="RHEA:19670"/>
    </physiologicalReaction>
</comment>
<comment type="subunit">
    <text evidence="2">Monomer.</text>
</comment>
<comment type="subcellular location">
    <subcellularLocation>
        <location evidence="2">Cytoplasm</location>
    </subcellularLocation>
</comment>
<comment type="similarity">
    <text evidence="2">Belongs to the TRAFAC class translation factor GTPase superfamily. Classic translation factor GTPase family. EF-Tu/EF-1A subfamily.</text>
</comment>
<gene>
    <name evidence="2" type="primary">tuf2</name>
    <name type="ordered locus">YpsIP31758_3918</name>
</gene>
<dbReference type="EC" id="3.6.5.3" evidence="2"/>
<dbReference type="EMBL" id="CP000720">
    <property type="protein sequence ID" value="ABS48717.1"/>
    <property type="molecule type" value="Genomic_DNA"/>
</dbReference>
<dbReference type="SMR" id="A7FNN8"/>
<dbReference type="KEGG" id="ypi:YpsIP31758_3918"/>
<dbReference type="HOGENOM" id="CLU_007265_0_2_6"/>
<dbReference type="Proteomes" id="UP000002412">
    <property type="component" value="Chromosome"/>
</dbReference>
<dbReference type="GO" id="GO:0005829">
    <property type="term" value="C:cytosol"/>
    <property type="evidence" value="ECO:0007669"/>
    <property type="project" value="TreeGrafter"/>
</dbReference>
<dbReference type="GO" id="GO:0005525">
    <property type="term" value="F:GTP binding"/>
    <property type="evidence" value="ECO:0007669"/>
    <property type="project" value="UniProtKB-UniRule"/>
</dbReference>
<dbReference type="GO" id="GO:0003924">
    <property type="term" value="F:GTPase activity"/>
    <property type="evidence" value="ECO:0007669"/>
    <property type="project" value="InterPro"/>
</dbReference>
<dbReference type="GO" id="GO:0097216">
    <property type="term" value="F:guanosine tetraphosphate binding"/>
    <property type="evidence" value="ECO:0007669"/>
    <property type="project" value="UniProtKB-ARBA"/>
</dbReference>
<dbReference type="GO" id="GO:0003746">
    <property type="term" value="F:translation elongation factor activity"/>
    <property type="evidence" value="ECO:0007669"/>
    <property type="project" value="UniProtKB-UniRule"/>
</dbReference>
<dbReference type="CDD" id="cd01884">
    <property type="entry name" value="EF_Tu"/>
    <property type="match status" value="1"/>
</dbReference>
<dbReference type="CDD" id="cd03697">
    <property type="entry name" value="EFTU_II"/>
    <property type="match status" value="1"/>
</dbReference>
<dbReference type="CDD" id="cd03707">
    <property type="entry name" value="EFTU_III"/>
    <property type="match status" value="1"/>
</dbReference>
<dbReference type="FunFam" id="2.40.30.10:FF:000001">
    <property type="entry name" value="Elongation factor Tu"/>
    <property type="match status" value="1"/>
</dbReference>
<dbReference type="FunFam" id="3.40.50.300:FF:000003">
    <property type="entry name" value="Elongation factor Tu"/>
    <property type="match status" value="1"/>
</dbReference>
<dbReference type="Gene3D" id="3.40.50.300">
    <property type="entry name" value="P-loop containing nucleotide triphosphate hydrolases"/>
    <property type="match status" value="1"/>
</dbReference>
<dbReference type="Gene3D" id="2.40.30.10">
    <property type="entry name" value="Translation factors"/>
    <property type="match status" value="2"/>
</dbReference>
<dbReference type="HAMAP" id="MF_00118_B">
    <property type="entry name" value="EF_Tu_B"/>
    <property type="match status" value="1"/>
</dbReference>
<dbReference type="InterPro" id="IPR041709">
    <property type="entry name" value="EF-Tu_GTP-bd"/>
</dbReference>
<dbReference type="InterPro" id="IPR050055">
    <property type="entry name" value="EF-Tu_GTPase"/>
</dbReference>
<dbReference type="InterPro" id="IPR004161">
    <property type="entry name" value="EFTu-like_2"/>
</dbReference>
<dbReference type="InterPro" id="IPR033720">
    <property type="entry name" value="EFTU_2"/>
</dbReference>
<dbReference type="InterPro" id="IPR031157">
    <property type="entry name" value="G_TR_CS"/>
</dbReference>
<dbReference type="InterPro" id="IPR027417">
    <property type="entry name" value="P-loop_NTPase"/>
</dbReference>
<dbReference type="InterPro" id="IPR005225">
    <property type="entry name" value="Small_GTP-bd"/>
</dbReference>
<dbReference type="InterPro" id="IPR000795">
    <property type="entry name" value="T_Tr_GTP-bd_dom"/>
</dbReference>
<dbReference type="InterPro" id="IPR009000">
    <property type="entry name" value="Transl_B-barrel_sf"/>
</dbReference>
<dbReference type="InterPro" id="IPR009001">
    <property type="entry name" value="Transl_elong_EF1A/Init_IF2_C"/>
</dbReference>
<dbReference type="InterPro" id="IPR004541">
    <property type="entry name" value="Transl_elong_EFTu/EF1A_bac/org"/>
</dbReference>
<dbReference type="InterPro" id="IPR004160">
    <property type="entry name" value="Transl_elong_EFTu/EF1A_C"/>
</dbReference>
<dbReference type="NCBIfam" id="TIGR00485">
    <property type="entry name" value="EF-Tu"/>
    <property type="match status" value="1"/>
</dbReference>
<dbReference type="NCBIfam" id="NF000766">
    <property type="entry name" value="PRK00049.1"/>
    <property type="match status" value="1"/>
</dbReference>
<dbReference type="NCBIfam" id="NF009372">
    <property type="entry name" value="PRK12735.1"/>
    <property type="match status" value="1"/>
</dbReference>
<dbReference type="NCBIfam" id="NF009373">
    <property type="entry name" value="PRK12736.1"/>
    <property type="match status" value="1"/>
</dbReference>
<dbReference type="NCBIfam" id="TIGR00231">
    <property type="entry name" value="small_GTP"/>
    <property type="match status" value="1"/>
</dbReference>
<dbReference type="PANTHER" id="PTHR43721:SF22">
    <property type="entry name" value="ELONGATION FACTOR TU, MITOCHONDRIAL"/>
    <property type="match status" value="1"/>
</dbReference>
<dbReference type="PANTHER" id="PTHR43721">
    <property type="entry name" value="ELONGATION FACTOR TU-RELATED"/>
    <property type="match status" value="1"/>
</dbReference>
<dbReference type="Pfam" id="PF00009">
    <property type="entry name" value="GTP_EFTU"/>
    <property type="match status" value="1"/>
</dbReference>
<dbReference type="Pfam" id="PF03144">
    <property type="entry name" value="GTP_EFTU_D2"/>
    <property type="match status" value="1"/>
</dbReference>
<dbReference type="Pfam" id="PF03143">
    <property type="entry name" value="GTP_EFTU_D3"/>
    <property type="match status" value="1"/>
</dbReference>
<dbReference type="PRINTS" id="PR00315">
    <property type="entry name" value="ELONGATNFCT"/>
</dbReference>
<dbReference type="SUPFAM" id="SSF50465">
    <property type="entry name" value="EF-Tu/eEF-1alpha/eIF2-gamma C-terminal domain"/>
    <property type="match status" value="1"/>
</dbReference>
<dbReference type="SUPFAM" id="SSF52540">
    <property type="entry name" value="P-loop containing nucleoside triphosphate hydrolases"/>
    <property type="match status" value="1"/>
</dbReference>
<dbReference type="SUPFAM" id="SSF50447">
    <property type="entry name" value="Translation proteins"/>
    <property type="match status" value="1"/>
</dbReference>
<dbReference type="PROSITE" id="PS00301">
    <property type="entry name" value="G_TR_1"/>
    <property type="match status" value="1"/>
</dbReference>
<dbReference type="PROSITE" id="PS51722">
    <property type="entry name" value="G_TR_2"/>
    <property type="match status" value="1"/>
</dbReference>
<accession>A7FNN8</accession>